<name>FTSB_POLNS</name>
<feature type="chain" id="PRO_1000129935" description="Cell division protein FtsB">
    <location>
        <begin position="1"/>
        <end position="101"/>
    </location>
</feature>
<feature type="topological domain" description="Cytoplasmic" evidence="1">
    <location>
        <begin position="1"/>
        <end position="3"/>
    </location>
</feature>
<feature type="transmembrane region" description="Helical" evidence="1">
    <location>
        <begin position="4"/>
        <end position="21"/>
    </location>
</feature>
<feature type="topological domain" description="Periplasmic" evidence="1">
    <location>
        <begin position="22"/>
        <end position="101"/>
    </location>
</feature>
<feature type="coiled-coil region" evidence="1">
    <location>
        <begin position="33"/>
        <end position="53"/>
    </location>
</feature>
<accession>B1XUR7</accession>
<comment type="function">
    <text evidence="1">Essential cell division protein. May link together the upstream cell division proteins, which are predominantly cytoplasmic, with the downstream cell division proteins, which are predominantly periplasmic.</text>
</comment>
<comment type="subunit">
    <text evidence="1">Part of a complex composed of FtsB, FtsL and FtsQ.</text>
</comment>
<comment type="subcellular location">
    <subcellularLocation>
        <location evidence="1">Cell inner membrane</location>
        <topology evidence="1">Single-pass type II membrane protein</topology>
    </subcellularLocation>
    <text evidence="1">Localizes to the division septum.</text>
</comment>
<comment type="similarity">
    <text evidence="1">Belongs to the FtsB family.</text>
</comment>
<protein>
    <recommendedName>
        <fullName evidence="1">Cell division protein FtsB</fullName>
    </recommendedName>
</protein>
<gene>
    <name evidence="1" type="primary">ftsB</name>
    <name type="ordered locus">Pnec_0896</name>
</gene>
<dbReference type="EMBL" id="CP001010">
    <property type="protein sequence ID" value="ACB44094.1"/>
    <property type="molecule type" value="Genomic_DNA"/>
</dbReference>
<dbReference type="SMR" id="B1XUR7"/>
<dbReference type="STRING" id="452638.Pnec_0896"/>
<dbReference type="KEGG" id="pne:Pnec_0896"/>
<dbReference type="eggNOG" id="COG2919">
    <property type="taxonomic scope" value="Bacteria"/>
</dbReference>
<dbReference type="HOGENOM" id="CLU_134863_5_0_4"/>
<dbReference type="OrthoDB" id="7061211at2"/>
<dbReference type="GO" id="GO:0032153">
    <property type="term" value="C:cell division site"/>
    <property type="evidence" value="ECO:0007669"/>
    <property type="project" value="UniProtKB-UniRule"/>
</dbReference>
<dbReference type="GO" id="GO:0030428">
    <property type="term" value="C:cell septum"/>
    <property type="evidence" value="ECO:0007669"/>
    <property type="project" value="TreeGrafter"/>
</dbReference>
<dbReference type="GO" id="GO:0005886">
    <property type="term" value="C:plasma membrane"/>
    <property type="evidence" value="ECO:0007669"/>
    <property type="project" value="UniProtKB-SubCell"/>
</dbReference>
<dbReference type="GO" id="GO:0043093">
    <property type="term" value="P:FtsZ-dependent cytokinesis"/>
    <property type="evidence" value="ECO:0007669"/>
    <property type="project" value="UniProtKB-UniRule"/>
</dbReference>
<dbReference type="HAMAP" id="MF_00599">
    <property type="entry name" value="FtsB"/>
    <property type="match status" value="1"/>
</dbReference>
<dbReference type="InterPro" id="IPR023081">
    <property type="entry name" value="Cell_div_FtsB"/>
</dbReference>
<dbReference type="InterPro" id="IPR007060">
    <property type="entry name" value="FtsL/DivIC"/>
</dbReference>
<dbReference type="NCBIfam" id="NF002058">
    <property type="entry name" value="PRK00888.1"/>
    <property type="match status" value="1"/>
</dbReference>
<dbReference type="PANTHER" id="PTHR37485">
    <property type="entry name" value="CELL DIVISION PROTEIN FTSB"/>
    <property type="match status" value="1"/>
</dbReference>
<dbReference type="PANTHER" id="PTHR37485:SF1">
    <property type="entry name" value="CELL DIVISION PROTEIN FTSB"/>
    <property type="match status" value="1"/>
</dbReference>
<dbReference type="Pfam" id="PF04977">
    <property type="entry name" value="DivIC"/>
    <property type="match status" value="1"/>
</dbReference>
<sequence>MRIVIYSMLVLLIAIQYPLWLGKGGWLKVYEMERQVELQEAKNSLLALRNAKLSGDVKDLKDGTRAIEERACVEHGLIKEGEFFVQILPADKSSDTQVTKQ</sequence>
<keyword id="KW-0131">Cell cycle</keyword>
<keyword id="KW-0132">Cell division</keyword>
<keyword id="KW-0997">Cell inner membrane</keyword>
<keyword id="KW-1003">Cell membrane</keyword>
<keyword id="KW-0175">Coiled coil</keyword>
<keyword id="KW-0472">Membrane</keyword>
<keyword id="KW-0812">Transmembrane</keyword>
<keyword id="KW-1133">Transmembrane helix</keyword>
<organism>
    <name type="scientific">Polynucleobacter necessarius subsp. necessarius (strain STIR1)</name>
    <dbReference type="NCBI Taxonomy" id="452638"/>
    <lineage>
        <taxon>Bacteria</taxon>
        <taxon>Pseudomonadati</taxon>
        <taxon>Pseudomonadota</taxon>
        <taxon>Betaproteobacteria</taxon>
        <taxon>Burkholderiales</taxon>
        <taxon>Burkholderiaceae</taxon>
        <taxon>Polynucleobacter</taxon>
    </lineage>
</organism>
<reference key="1">
    <citation type="journal article" date="2013" name="Proc. Natl. Acad. Sci. U.S.A.">
        <title>Polynucleobacter necessarius, a model for genome reduction in both free-living and symbiotic bacteria.</title>
        <authorList>
            <person name="Boscaro V."/>
            <person name="Felletti M."/>
            <person name="Vannini C."/>
            <person name="Ackerman M.S."/>
            <person name="Chain P.S."/>
            <person name="Malfatti S."/>
            <person name="Vergez L.M."/>
            <person name="Shin M."/>
            <person name="Doak T.G."/>
            <person name="Lynch M."/>
            <person name="Petroni G."/>
        </authorList>
    </citation>
    <scope>NUCLEOTIDE SEQUENCE [LARGE SCALE GENOMIC DNA]</scope>
    <source>
        <strain>STIR1</strain>
    </source>
</reference>
<evidence type="ECO:0000255" key="1">
    <source>
        <dbReference type="HAMAP-Rule" id="MF_00599"/>
    </source>
</evidence>
<proteinExistence type="inferred from homology"/>